<feature type="chain" id="PRO_0000364777" description="Ferredoxin--NADP reductase">
    <location>
        <begin position="1"/>
        <end position="322"/>
    </location>
</feature>
<feature type="binding site" evidence="1">
    <location>
        <position position="12"/>
    </location>
    <ligand>
        <name>FAD</name>
        <dbReference type="ChEBI" id="CHEBI:57692"/>
    </ligand>
</feature>
<feature type="binding site" evidence="1">
    <location>
        <position position="31"/>
    </location>
    <ligand>
        <name>FAD</name>
        <dbReference type="ChEBI" id="CHEBI:57692"/>
    </ligand>
</feature>
<feature type="binding site" evidence="1">
    <location>
        <position position="39"/>
    </location>
    <ligand>
        <name>FAD</name>
        <dbReference type="ChEBI" id="CHEBI:57692"/>
    </ligand>
</feature>
<feature type="binding site" evidence="1">
    <location>
        <position position="44"/>
    </location>
    <ligand>
        <name>FAD</name>
        <dbReference type="ChEBI" id="CHEBI:57692"/>
    </ligand>
</feature>
<feature type="binding site" evidence="1">
    <location>
        <position position="86"/>
    </location>
    <ligand>
        <name>FAD</name>
        <dbReference type="ChEBI" id="CHEBI:57692"/>
    </ligand>
</feature>
<feature type="binding site" evidence="1">
    <location>
        <position position="119"/>
    </location>
    <ligand>
        <name>FAD</name>
        <dbReference type="ChEBI" id="CHEBI:57692"/>
    </ligand>
</feature>
<feature type="binding site" evidence="1">
    <location>
        <position position="317"/>
    </location>
    <ligand>
        <name>FAD</name>
        <dbReference type="ChEBI" id="CHEBI:57692"/>
    </ligand>
</feature>
<evidence type="ECO:0000255" key="1">
    <source>
        <dbReference type="HAMAP-Rule" id="MF_01685"/>
    </source>
</evidence>
<evidence type="ECO:0000305" key="2"/>
<gene>
    <name type="ordered locus">ACL_0467</name>
</gene>
<organism>
    <name type="scientific">Acholeplasma laidlawii (strain PG-8A)</name>
    <dbReference type="NCBI Taxonomy" id="441768"/>
    <lineage>
        <taxon>Bacteria</taxon>
        <taxon>Bacillati</taxon>
        <taxon>Mycoplasmatota</taxon>
        <taxon>Mollicutes</taxon>
        <taxon>Acholeplasmatales</taxon>
        <taxon>Acholeplasmataceae</taxon>
        <taxon>Acholeplasma</taxon>
    </lineage>
</organism>
<dbReference type="EC" id="1.18.1.2" evidence="1"/>
<dbReference type="EMBL" id="CP000896">
    <property type="protein sequence ID" value="ABX81086.1"/>
    <property type="status" value="ALT_INIT"/>
    <property type="molecule type" value="Genomic_DNA"/>
</dbReference>
<dbReference type="SMR" id="A9NFF6"/>
<dbReference type="STRING" id="441768.ACL_0467"/>
<dbReference type="KEGG" id="acl:ACL_0467"/>
<dbReference type="eggNOG" id="COG0492">
    <property type="taxonomic scope" value="Bacteria"/>
</dbReference>
<dbReference type="HOGENOM" id="CLU_031864_5_5_14"/>
<dbReference type="Proteomes" id="UP000008558">
    <property type="component" value="Chromosome"/>
</dbReference>
<dbReference type="GO" id="GO:0004324">
    <property type="term" value="F:ferredoxin-NADP+ reductase activity"/>
    <property type="evidence" value="ECO:0007669"/>
    <property type="project" value="UniProtKB-UniRule"/>
</dbReference>
<dbReference type="GO" id="GO:0050660">
    <property type="term" value="F:flavin adenine dinucleotide binding"/>
    <property type="evidence" value="ECO:0007669"/>
    <property type="project" value="UniProtKB-UniRule"/>
</dbReference>
<dbReference type="GO" id="GO:0050661">
    <property type="term" value="F:NADP binding"/>
    <property type="evidence" value="ECO:0007669"/>
    <property type="project" value="UniProtKB-UniRule"/>
</dbReference>
<dbReference type="Gene3D" id="3.50.50.60">
    <property type="entry name" value="FAD/NAD(P)-binding domain"/>
    <property type="match status" value="2"/>
</dbReference>
<dbReference type="HAMAP" id="MF_01685">
    <property type="entry name" value="FENR2"/>
    <property type="match status" value="1"/>
</dbReference>
<dbReference type="InterPro" id="IPR036188">
    <property type="entry name" value="FAD/NAD-bd_sf"/>
</dbReference>
<dbReference type="InterPro" id="IPR023753">
    <property type="entry name" value="FAD/NAD-binding_dom"/>
</dbReference>
<dbReference type="InterPro" id="IPR022890">
    <property type="entry name" value="Fd--NADP_Rdtase_type_2"/>
</dbReference>
<dbReference type="InterPro" id="IPR050097">
    <property type="entry name" value="Ferredoxin-NADP_redctase_2"/>
</dbReference>
<dbReference type="PANTHER" id="PTHR48105">
    <property type="entry name" value="THIOREDOXIN REDUCTASE 1-RELATED-RELATED"/>
    <property type="match status" value="1"/>
</dbReference>
<dbReference type="Pfam" id="PF07992">
    <property type="entry name" value="Pyr_redox_2"/>
    <property type="match status" value="1"/>
</dbReference>
<dbReference type="PRINTS" id="PR00368">
    <property type="entry name" value="FADPNR"/>
</dbReference>
<dbReference type="PRINTS" id="PR00469">
    <property type="entry name" value="PNDRDTASEII"/>
</dbReference>
<dbReference type="SUPFAM" id="SSF51905">
    <property type="entry name" value="FAD/NAD(P)-binding domain"/>
    <property type="match status" value="1"/>
</dbReference>
<name>FENR_ACHLI</name>
<proteinExistence type="inferred from homology"/>
<keyword id="KW-0274">FAD</keyword>
<keyword id="KW-0285">Flavoprotein</keyword>
<keyword id="KW-0521">NADP</keyword>
<keyword id="KW-0560">Oxidoreductase</keyword>
<keyword id="KW-1185">Reference proteome</keyword>
<sequence length="322" mass="36026">MLEVLIIGAGPTGLYAAFLAGLRNLKAAVIESSAEPGGQLTAVYKDKYIYDIPGFPKITAKDYIDGQVLQYERFKSDLPIYYNEEAIDIKKHDDHFIVTTTTKTIETKFVLIAHGGGGFVPQKLKIDEHYDNILYFIKDLNQFKDKKIVVLGGGDSALDWAIDLSEYTKDVTLVHRRDEFRALQSSVDHFREKGTILTPYIVDTVEGNDKLVHTLVLKHAKTHERLNLDADYIVVNYGFVLTKSRLDEWGIEGEKGLIKVDYTMKTSLDGIYAAGNGIDYPGKVKLISTGQGEAATAIQSITTLLYPEKTRKFEHSTALIKE</sequence>
<protein>
    <recommendedName>
        <fullName evidence="1">Ferredoxin--NADP reductase</fullName>
        <shortName evidence="1">FNR</shortName>
        <shortName evidence="1">Fd-NADP(+) reductase</shortName>
        <ecNumber evidence="1">1.18.1.2</ecNumber>
    </recommendedName>
</protein>
<comment type="catalytic activity">
    <reaction evidence="1">
        <text>2 reduced [2Fe-2S]-[ferredoxin] + NADP(+) + H(+) = 2 oxidized [2Fe-2S]-[ferredoxin] + NADPH</text>
        <dbReference type="Rhea" id="RHEA:20125"/>
        <dbReference type="Rhea" id="RHEA-COMP:10000"/>
        <dbReference type="Rhea" id="RHEA-COMP:10001"/>
        <dbReference type="ChEBI" id="CHEBI:15378"/>
        <dbReference type="ChEBI" id="CHEBI:33737"/>
        <dbReference type="ChEBI" id="CHEBI:33738"/>
        <dbReference type="ChEBI" id="CHEBI:57783"/>
        <dbReference type="ChEBI" id="CHEBI:58349"/>
        <dbReference type="EC" id="1.18.1.2"/>
    </reaction>
</comment>
<comment type="cofactor">
    <cofactor evidence="1">
        <name>FAD</name>
        <dbReference type="ChEBI" id="CHEBI:57692"/>
    </cofactor>
    <text evidence="1">Binds 1 FAD per subunit.</text>
</comment>
<comment type="subunit">
    <text evidence="1">Homodimer.</text>
</comment>
<comment type="similarity">
    <text evidence="1">Belongs to the ferredoxin--NADP reductase type 2 family.</text>
</comment>
<comment type="sequence caution" evidence="2">
    <conflict type="erroneous initiation">
        <sequence resource="EMBL-CDS" id="ABX81086"/>
    </conflict>
</comment>
<reference key="1">
    <citation type="journal article" date="2011" name="J. Bacteriol.">
        <title>Complete genome and proteome of Acholeplasma laidlawii.</title>
        <authorList>
            <person name="Lazarev V.N."/>
            <person name="Levitskii S.A."/>
            <person name="Basovskii Y.I."/>
            <person name="Chukin M.M."/>
            <person name="Akopian T.A."/>
            <person name="Vereshchagin V.V."/>
            <person name="Kostrjukova E.S."/>
            <person name="Kovaleva G.Y."/>
            <person name="Kazanov M.D."/>
            <person name="Malko D.B."/>
            <person name="Vitreschak A.G."/>
            <person name="Sernova N.V."/>
            <person name="Gelfand M.S."/>
            <person name="Demina I.A."/>
            <person name="Serebryakova M.V."/>
            <person name="Galyamina M.A."/>
            <person name="Vtyurin N.N."/>
            <person name="Rogov S.I."/>
            <person name="Alexeev D.G."/>
            <person name="Ladygina V.G."/>
            <person name="Govorun V.M."/>
        </authorList>
    </citation>
    <scope>NUCLEOTIDE SEQUENCE [LARGE SCALE GENOMIC DNA]</scope>
    <source>
        <strain>PG-8A</strain>
    </source>
</reference>
<accession>A9NFF6</accession>